<comment type="function">
    <text evidence="1">Plays an essential role in the initiation and regulation of chromosomal replication. ATP-DnaA binds to the origin of replication (oriC) to initiate formation of the DNA replication initiation complex once per cell cycle. Binds the DnaA box (a 9 base pair repeat at the origin) and separates the double-stranded (ds)DNA. Forms a right-handed helical filament on oriC DNA; dsDNA binds to the exterior of the filament while single-stranded (ss)DNA is stabiized in the filament's interior. The ATP-DnaA-oriC complex binds and stabilizes one strand of the AT-rich DNA unwinding element (DUE), permitting loading of DNA polymerase. After initiation quickly degrades to an ADP-DnaA complex that is not apt for DNA replication. Binds acidic phospholipids.</text>
</comment>
<comment type="subunit">
    <text evidence="1">Oligomerizes as a right-handed, spiral filament on DNA at oriC.</text>
</comment>
<comment type="subcellular location">
    <subcellularLocation>
        <location evidence="1">Cytoplasm</location>
    </subcellularLocation>
</comment>
<comment type="domain">
    <text evidence="1">Domain I is involved in oligomerization and binding regulators, domain II is flexibile and of varying length in different bacteria, domain III forms the AAA+ region, while domain IV binds dsDNA.</text>
</comment>
<comment type="similarity">
    <text evidence="1">Belongs to the DnaA family.</text>
</comment>
<feature type="chain" id="PRO_0000114127" description="Chromosomal replication initiator protein DnaA">
    <location>
        <begin position="1"/>
        <end position="446"/>
    </location>
</feature>
<feature type="region of interest" description="Domain I, interacts with DnaA modulators" evidence="1">
    <location>
        <begin position="1"/>
        <end position="92"/>
    </location>
</feature>
<feature type="region of interest" description="Domain II" evidence="1">
    <location>
        <begin position="93"/>
        <end position="109"/>
    </location>
</feature>
<feature type="region of interest" description="Domain III, AAA+ region" evidence="1">
    <location>
        <begin position="110"/>
        <end position="326"/>
    </location>
</feature>
<feature type="region of interest" description="Domain IV, binds dsDNA" evidence="1">
    <location>
        <begin position="327"/>
        <end position="446"/>
    </location>
</feature>
<feature type="binding site" evidence="1">
    <location>
        <position position="154"/>
    </location>
    <ligand>
        <name>ATP</name>
        <dbReference type="ChEBI" id="CHEBI:30616"/>
    </ligand>
</feature>
<feature type="binding site" evidence="1">
    <location>
        <position position="156"/>
    </location>
    <ligand>
        <name>ATP</name>
        <dbReference type="ChEBI" id="CHEBI:30616"/>
    </ligand>
</feature>
<feature type="binding site" evidence="1">
    <location>
        <position position="157"/>
    </location>
    <ligand>
        <name>ATP</name>
        <dbReference type="ChEBI" id="CHEBI:30616"/>
    </ligand>
</feature>
<feature type="binding site" evidence="1">
    <location>
        <position position="158"/>
    </location>
    <ligand>
        <name>ATP</name>
        <dbReference type="ChEBI" id="CHEBI:30616"/>
    </ligand>
</feature>
<reference key="1">
    <citation type="journal article" date="2006" name="J. Bacteriol.">
        <title>Pathogenomic sequence analysis of Bacillus cereus and Bacillus thuringiensis isolates closely related to Bacillus anthracis.</title>
        <authorList>
            <person name="Han C.S."/>
            <person name="Xie G."/>
            <person name="Challacombe J.F."/>
            <person name="Altherr M.R."/>
            <person name="Bhotika S.S."/>
            <person name="Bruce D."/>
            <person name="Campbell C.S."/>
            <person name="Campbell M.L."/>
            <person name="Chen J."/>
            <person name="Chertkov O."/>
            <person name="Cleland C."/>
            <person name="Dimitrijevic M."/>
            <person name="Doggett N.A."/>
            <person name="Fawcett J.J."/>
            <person name="Glavina T."/>
            <person name="Goodwin L.A."/>
            <person name="Hill K.K."/>
            <person name="Hitchcock P."/>
            <person name="Jackson P.J."/>
            <person name="Keim P."/>
            <person name="Kewalramani A.R."/>
            <person name="Longmire J."/>
            <person name="Lucas S."/>
            <person name="Malfatti S."/>
            <person name="McMurry K."/>
            <person name="Meincke L.J."/>
            <person name="Misra M."/>
            <person name="Moseman B.L."/>
            <person name="Mundt M."/>
            <person name="Munk A.C."/>
            <person name="Okinaka R.T."/>
            <person name="Parson-Quintana B."/>
            <person name="Reilly L.P."/>
            <person name="Richardson P."/>
            <person name="Robinson D.L."/>
            <person name="Rubin E."/>
            <person name="Saunders E."/>
            <person name="Tapia R."/>
            <person name="Tesmer J.G."/>
            <person name="Thayer N."/>
            <person name="Thompson L.S."/>
            <person name="Tice H."/>
            <person name="Ticknor L.O."/>
            <person name="Wills P.L."/>
            <person name="Brettin T.S."/>
            <person name="Gilna P."/>
        </authorList>
    </citation>
    <scope>NUCLEOTIDE SEQUENCE [LARGE SCALE GENOMIC DNA]</scope>
    <source>
        <strain>ZK / E33L</strain>
    </source>
</reference>
<evidence type="ECO:0000255" key="1">
    <source>
        <dbReference type="HAMAP-Rule" id="MF_00377"/>
    </source>
</evidence>
<dbReference type="EMBL" id="CP000001">
    <property type="protein sequence ID" value="AAU20227.1"/>
    <property type="molecule type" value="Genomic_DNA"/>
</dbReference>
<dbReference type="RefSeq" id="WP_000428021.1">
    <property type="nucleotide sequence ID" value="NZ_CP009968.1"/>
</dbReference>
<dbReference type="SMR" id="Q63HG7"/>
<dbReference type="GeneID" id="45020035"/>
<dbReference type="KEGG" id="bcz:BCE33L0001"/>
<dbReference type="PATRIC" id="fig|288681.22.peg.155"/>
<dbReference type="Proteomes" id="UP000002612">
    <property type="component" value="Chromosome"/>
</dbReference>
<dbReference type="GO" id="GO:0005737">
    <property type="term" value="C:cytoplasm"/>
    <property type="evidence" value="ECO:0007669"/>
    <property type="project" value="UniProtKB-SubCell"/>
</dbReference>
<dbReference type="GO" id="GO:0005886">
    <property type="term" value="C:plasma membrane"/>
    <property type="evidence" value="ECO:0007669"/>
    <property type="project" value="TreeGrafter"/>
</dbReference>
<dbReference type="GO" id="GO:0005524">
    <property type="term" value="F:ATP binding"/>
    <property type="evidence" value="ECO:0007669"/>
    <property type="project" value="UniProtKB-UniRule"/>
</dbReference>
<dbReference type="GO" id="GO:0016887">
    <property type="term" value="F:ATP hydrolysis activity"/>
    <property type="evidence" value="ECO:0007669"/>
    <property type="project" value="InterPro"/>
</dbReference>
<dbReference type="GO" id="GO:0003688">
    <property type="term" value="F:DNA replication origin binding"/>
    <property type="evidence" value="ECO:0007669"/>
    <property type="project" value="UniProtKB-UniRule"/>
</dbReference>
<dbReference type="GO" id="GO:0008289">
    <property type="term" value="F:lipid binding"/>
    <property type="evidence" value="ECO:0007669"/>
    <property type="project" value="UniProtKB-KW"/>
</dbReference>
<dbReference type="GO" id="GO:0006270">
    <property type="term" value="P:DNA replication initiation"/>
    <property type="evidence" value="ECO:0007669"/>
    <property type="project" value="UniProtKB-UniRule"/>
</dbReference>
<dbReference type="GO" id="GO:0006275">
    <property type="term" value="P:regulation of DNA replication"/>
    <property type="evidence" value="ECO:0007669"/>
    <property type="project" value="UniProtKB-UniRule"/>
</dbReference>
<dbReference type="CDD" id="cd00009">
    <property type="entry name" value="AAA"/>
    <property type="match status" value="1"/>
</dbReference>
<dbReference type="CDD" id="cd06571">
    <property type="entry name" value="Bac_DnaA_C"/>
    <property type="match status" value="1"/>
</dbReference>
<dbReference type="FunFam" id="1.10.1750.10:FF:000003">
    <property type="entry name" value="Chromosomal replication initiator protein DnaA"/>
    <property type="match status" value="1"/>
</dbReference>
<dbReference type="FunFam" id="1.10.8.60:FF:000003">
    <property type="entry name" value="Chromosomal replication initiator protein DnaA"/>
    <property type="match status" value="1"/>
</dbReference>
<dbReference type="FunFam" id="3.30.300.180:FF:000002">
    <property type="entry name" value="Chromosomal replication initiator protein DnaA"/>
    <property type="match status" value="1"/>
</dbReference>
<dbReference type="FunFam" id="3.40.50.300:FF:000150">
    <property type="entry name" value="Chromosomal replication initiator protein DnaA"/>
    <property type="match status" value="1"/>
</dbReference>
<dbReference type="Gene3D" id="1.10.1750.10">
    <property type="match status" value="1"/>
</dbReference>
<dbReference type="Gene3D" id="1.10.8.60">
    <property type="match status" value="1"/>
</dbReference>
<dbReference type="Gene3D" id="3.30.300.180">
    <property type="match status" value="1"/>
</dbReference>
<dbReference type="Gene3D" id="3.40.50.300">
    <property type="entry name" value="P-loop containing nucleotide triphosphate hydrolases"/>
    <property type="match status" value="1"/>
</dbReference>
<dbReference type="HAMAP" id="MF_00377">
    <property type="entry name" value="DnaA_bact"/>
    <property type="match status" value="1"/>
</dbReference>
<dbReference type="InterPro" id="IPR003593">
    <property type="entry name" value="AAA+_ATPase"/>
</dbReference>
<dbReference type="InterPro" id="IPR001957">
    <property type="entry name" value="Chromosome_initiator_DnaA"/>
</dbReference>
<dbReference type="InterPro" id="IPR020591">
    <property type="entry name" value="Chromosome_initiator_DnaA-like"/>
</dbReference>
<dbReference type="InterPro" id="IPR018312">
    <property type="entry name" value="Chromosome_initiator_DnaA_CS"/>
</dbReference>
<dbReference type="InterPro" id="IPR013159">
    <property type="entry name" value="DnaA_C"/>
</dbReference>
<dbReference type="InterPro" id="IPR013317">
    <property type="entry name" value="DnaA_dom"/>
</dbReference>
<dbReference type="InterPro" id="IPR024633">
    <property type="entry name" value="DnaA_N_dom"/>
</dbReference>
<dbReference type="InterPro" id="IPR038454">
    <property type="entry name" value="DnaA_N_sf"/>
</dbReference>
<dbReference type="InterPro" id="IPR027417">
    <property type="entry name" value="P-loop_NTPase"/>
</dbReference>
<dbReference type="InterPro" id="IPR010921">
    <property type="entry name" value="Trp_repressor/repl_initiator"/>
</dbReference>
<dbReference type="NCBIfam" id="TIGR00362">
    <property type="entry name" value="DnaA"/>
    <property type="match status" value="1"/>
</dbReference>
<dbReference type="NCBIfam" id="NF010686">
    <property type="entry name" value="PRK14086.1"/>
    <property type="match status" value="1"/>
</dbReference>
<dbReference type="PANTHER" id="PTHR30050">
    <property type="entry name" value="CHROMOSOMAL REPLICATION INITIATOR PROTEIN DNAA"/>
    <property type="match status" value="1"/>
</dbReference>
<dbReference type="PANTHER" id="PTHR30050:SF2">
    <property type="entry name" value="CHROMOSOMAL REPLICATION INITIATOR PROTEIN DNAA"/>
    <property type="match status" value="1"/>
</dbReference>
<dbReference type="Pfam" id="PF00308">
    <property type="entry name" value="Bac_DnaA"/>
    <property type="match status" value="1"/>
</dbReference>
<dbReference type="Pfam" id="PF08299">
    <property type="entry name" value="Bac_DnaA_C"/>
    <property type="match status" value="1"/>
</dbReference>
<dbReference type="Pfam" id="PF11638">
    <property type="entry name" value="DnaA_N"/>
    <property type="match status" value="1"/>
</dbReference>
<dbReference type="PRINTS" id="PR00051">
    <property type="entry name" value="DNAA"/>
</dbReference>
<dbReference type="SMART" id="SM00382">
    <property type="entry name" value="AAA"/>
    <property type="match status" value="1"/>
</dbReference>
<dbReference type="SMART" id="SM00760">
    <property type="entry name" value="Bac_DnaA_C"/>
    <property type="match status" value="1"/>
</dbReference>
<dbReference type="SUPFAM" id="SSF52540">
    <property type="entry name" value="P-loop containing nucleoside triphosphate hydrolases"/>
    <property type="match status" value="1"/>
</dbReference>
<dbReference type="SUPFAM" id="SSF48295">
    <property type="entry name" value="TrpR-like"/>
    <property type="match status" value="1"/>
</dbReference>
<dbReference type="PROSITE" id="PS01008">
    <property type="entry name" value="DNAA"/>
    <property type="match status" value="1"/>
</dbReference>
<organism>
    <name type="scientific">Bacillus cereus (strain ZK / E33L)</name>
    <dbReference type="NCBI Taxonomy" id="288681"/>
    <lineage>
        <taxon>Bacteria</taxon>
        <taxon>Bacillati</taxon>
        <taxon>Bacillota</taxon>
        <taxon>Bacilli</taxon>
        <taxon>Bacillales</taxon>
        <taxon>Bacillaceae</taxon>
        <taxon>Bacillus</taxon>
        <taxon>Bacillus cereus group</taxon>
    </lineage>
</organism>
<keyword id="KW-0067">ATP-binding</keyword>
<keyword id="KW-0963">Cytoplasm</keyword>
<keyword id="KW-0235">DNA replication</keyword>
<keyword id="KW-0238">DNA-binding</keyword>
<keyword id="KW-0446">Lipid-binding</keyword>
<keyword id="KW-0547">Nucleotide-binding</keyword>
<gene>
    <name evidence="1" type="primary">dnaA</name>
    <name type="ordered locus">BCE33L0001</name>
</gene>
<name>DNAA_BACCZ</name>
<proteinExistence type="inferred from homology"/>
<accession>Q63HG7</accession>
<sequence>MENISDLWNSALKELEKKVSKPSYETWLKSTTAHNLKKDVLTITAPNEFARDWLESHYSELISETLYDLTGAKLAIRFIIPQSQAEEEIDLPPAKPNAAQDDSNHLPQSMLNPKYTFDTFVIGSGNRFAHAASLAVAEAPAKAYNPLFIYGGVGLGKTHLMHAIGHYVIEHNPNAKVVYLSSEKFTNEFINSIRDNKAVDFRNKYRNVDVLLIDDIQFLAGKEQTQEEFFHTFNALHEESKQIVISSDRPPKEIPTLEDRLRSRFEWGLITDITPPDLETRIAILRKKAKAEGLDIPNEVMLYIANQIDSNIRELEGALIRVVAYSSLINKDINADLAAEALKDIIPNSKPKIISIYDIQKAVGDVYQVKLEDFKAKKRTKSVAFPRQIAMYLSRELTDSSLPKIGEEFGGRDHTTVIHAHEKISKLLKTDTQLQKQVEEINDILK</sequence>
<protein>
    <recommendedName>
        <fullName evidence="1">Chromosomal replication initiator protein DnaA</fullName>
    </recommendedName>
</protein>